<feature type="chain" id="PRO_0000434320" description="Beta-glucuronosyltransferase GlcAT14A">
    <location>
        <begin position="1"/>
        <end position="447"/>
    </location>
</feature>
<feature type="topological domain" description="Cytoplasmic" evidence="5">
    <location>
        <begin position="1"/>
        <end position="33"/>
    </location>
</feature>
<feature type="transmembrane region" description="Helical; Signal-anchor for type II membrane protein" evidence="1">
    <location>
        <begin position="34"/>
        <end position="54"/>
    </location>
</feature>
<feature type="topological domain" description="Lumenal" evidence="5">
    <location>
        <begin position="55"/>
        <end position="447"/>
    </location>
</feature>
<feature type="glycosylation site" description="N-linked (GlcNAc...) asparagine" evidence="2">
    <location>
        <position position="151"/>
    </location>
</feature>
<feature type="glycosylation site" description="N-linked (GlcNAc...) asparagine" evidence="2">
    <location>
        <position position="200"/>
    </location>
</feature>
<feature type="glycosylation site" description="N-linked (GlcNAc...) asparagine" evidence="2">
    <location>
        <position position="329"/>
    </location>
</feature>
<feature type="glycosylation site" description="N-linked (GlcNAc...) asparagine" evidence="2">
    <location>
        <position position="405"/>
    </location>
</feature>
<dbReference type="EC" id="2.4.1.-" evidence="5"/>
<dbReference type="EMBL" id="KJ138655">
    <property type="protein sequence ID" value="AHL38595.1"/>
    <property type="molecule type" value="mRNA"/>
</dbReference>
<dbReference type="EMBL" id="AB010077">
    <property type="protein sequence ID" value="BAB10223.1"/>
    <property type="molecule type" value="Genomic_DNA"/>
</dbReference>
<dbReference type="EMBL" id="CP002688">
    <property type="protein sequence ID" value="AED94499.1"/>
    <property type="molecule type" value="Genomic_DNA"/>
</dbReference>
<dbReference type="EMBL" id="BT006493">
    <property type="protein sequence ID" value="AAP21301.1"/>
    <property type="molecule type" value="mRNA"/>
</dbReference>
<dbReference type="EMBL" id="AK227442">
    <property type="protein sequence ID" value="BAE99445.1"/>
    <property type="molecule type" value="mRNA"/>
</dbReference>
<dbReference type="RefSeq" id="NP_198815.1">
    <property type="nucleotide sequence ID" value="NM_123362.5"/>
</dbReference>
<dbReference type="SMR" id="Q9FLD7"/>
<dbReference type="FunCoup" id="Q9FLD7">
    <property type="interactions" value="479"/>
</dbReference>
<dbReference type="STRING" id="3702.Q9FLD7"/>
<dbReference type="CAZy" id="GT14">
    <property type="family name" value="Glycosyltransferase Family 14"/>
</dbReference>
<dbReference type="GlyCosmos" id="Q9FLD7">
    <property type="glycosylation" value="4 sites, No reported glycans"/>
</dbReference>
<dbReference type="GlyGen" id="Q9FLD7">
    <property type="glycosylation" value="4 sites"/>
</dbReference>
<dbReference type="iPTMnet" id="Q9FLD7"/>
<dbReference type="PaxDb" id="3702-AT5G39990.1"/>
<dbReference type="ProteomicsDB" id="247234"/>
<dbReference type="EnsemblPlants" id="AT5G39990.1">
    <property type="protein sequence ID" value="AT5G39990.1"/>
    <property type="gene ID" value="AT5G39990"/>
</dbReference>
<dbReference type="GeneID" id="833996"/>
<dbReference type="Gramene" id="AT5G39990.1">
    <property type="protein sequence ID" value="AT5G39990.1"/>
    <property type="gene ID" value="AT5G39990"/>
</dbReference>
<dbReference type="KEGG" id="ath:AT5G39990"/>
<dbReference type="Araport" id="AT5G39990"/>
<dbReference type="TAIR" id="AT5G39990">
    <property type="gene designation" value="GLCAT14A"/>
</dbReference>
<dbReference type="eggNOG" id="KOG0799">
    <property type="taxonomic scope" value="Eukaryota"/>
</dbReference>
<dbReference type="HOGENOM" id="CLU_034994_0_0_1"/>
<dbReference type="InParanoid" id="Q9FLD7"/>
<dbReference type="OMA" id="FRRFMNV"/>
<dbReference type="PhylomeDB" id="Q9FLD7"/>
<dbReference type="BioCyc" id="ARA:AT5G39990-MONOMER"/>
<dbReference type="PRO" id="PR:Q9FLD7"/>
<dbReference type="Proteomes" id="UP000006548">
    <property type="component" value="Chromosome 5"/>
</dbReference>
<dbReference type="ExpressionAtlas" id="Q9FLD7">
    <property type="expression patterns" value="baseline and differential"/>
</dbReference>
<dbReference type="GO" id="GO:0005794">
    <property type="term" value="C:Golgi apparatus"/>
    <property type="evidence" value="ECO:0000314"/>
    <property type="project" value="TAIR"/>
</dbReference>
<dbReference type="GO" id="GO:0000139">
    <property type="term" value="C:Golgi membrane"/>
    <property type="evidence" value="ECO:0007669"/>
    <property type="project" value="UniProtKB-SubCell"/>
</dbReference>
<dbReference type="GO" id="GO:0015020">
    <property type="term" value="F:glucuronosyltransferase activity"/>
    <property type="evidence" value="ECO:0000314"/>
    <property type="project" value="TAIR"/>
</dbReference>
<dbReference type="GO" id="GO:0009826">
    <property type="term" value="P:unidimensional cell growth"/>
    <property type="evidence" value="ECO:0000314"/>
    <property type="project" value="TAIR"/>
</dbReference>
<dbReference type="InterPro" id="IPR044610">
    <property type="entry name" value="GLCAT14A/B/C"/>
</dbReference>
<dbReference type="InterPro" id="IPR003406">
    <property type="entry name" value="Glyco_trans_14"/>
</dbReference>
<dbReference type="PANTHER" id="PTHR45719:SF3">
    <property type="entry name" value="BETA-GLUCURONOSYLTRANSFERASE GLCAT14A"/>
    <property type="match status" value="1"/>
</dbReference>
<dbReference type="PANTHER" id="PTHR45719">
    <property type="entry name" value="GLYCOSYLTRANSFERASE"/>
    <property type="match status" value="1"/>
</dbReference>
<dbReference type="Pfam" id="PF02485">
    <property type="entry name" value="Branch"/>
    <property type="match status" value="1"/>
</dbReference>
<sequence length="447" mass="51118">MKKLRSYYSNVRHHQNHHHHHHHHSNIVSSERKWIFFPLLIGSIFALFLLFLTTTLTSPTGGVRFLPFTRPVLLTGSGSSAFVESKIKPQQISSLPSPPRFAYLISGSAGDGKSLRRTLLALYHPNNRYVVHLDRESSREEREELHGYIKNSSLFRRFMNVHMIEKANLVTYRGPTMVANTLHAAAILLREGADWDWFINLSSSDYPLVTQDDLLHIFSHLPRDLNFIDHTSNIGWKASQRAKPVIIDPGLYLNKKSDVFWVTQRRSIPTAFKLFTGSAWMALSRPFVDYCIWGWDNLPRTVLMYYSNFLSSPEGYFHTVLCNAEEFRNTTVNSDLHFISWDNPPKQHPHHLTLTDMTKMVNSNAPFARKFRREDPVLDKIDDELLNRGPGMITPGGWCIGSHENGSDPCAVIGDTDVIRPGPGARRLENLVTSLLSTENFRSKQCK</sequence>
<accession>Q9FLD7</accession>
<evidence type="ECO:0000255" key="1"/>
<evidence type="ECO:0000255" key="2">
    <source>
        <dbReference type="PROSITE-ProRule" id="PRU00498"/>
    </source>
</evidence>
<evidence type="ECO:0000269" key="3">
    <source>
    </source>
</evidence>
<evidence type="ECO:0000303" key="4">
    <source>
    </source>
</evidence>
<evidence type="ECO:0000305" key="5"/>
<evidence type="ECO:0000312" key="6">
    <source>
        <dbReference type="Araport" id="AT5G39990"/>
    </source>
</evidence>
<evidence type="ECO:0000312" key="7">
    <source>
        <dbReference type="EMBL" id="BAB10223.1"/>
    </source>
</evidence>
<keyword id="KW-0325">Glycoprotein</keyword>
<keyword id="KW-0328">Glycosyltransferase</keyword>
<keyword id="KW-0333">Golgi apparatus</keyword>
<keyword id="KW-0472">Membrane</keyword>
<keyword id="KW-1185">Reference proteome</keyword>
<keyword id="KW-0735">Signal-anchor</keyword>
<keyword id="KW-0808">Transferase</keyword>
<keyword id="KW-0812">Transmembrane</keyword>
<keyword id="KW-1133">Transmembrane helix</keyword>
<gene>
    <name evidence="4" type="primary">GLCAT14A</name>
    <name evidence="6" type="ordered locus">At5g39990</name>
    <name evidence="7" type="ORF">MYH19.19</name>
</gene>
<organism>
    <name type="scientific">Arabidopsis thaliana</name>
    <name type="common">Mouse-ear cress</name>
    <dbReference type="NCBI Taxonomy" id="3702"/>
    <lineage>
        <taxon>Eukaryota</taxon>
        <taxon>Viridiplantae</taxon>
        <taxon>Streptophyta</taxon>
        <taxon>Embryophyta</taxon>
        <taxon>Tracheophyta</taxon>
        <taxon>Spermatophyta</taxon>
        <taxon>Magnoliopsida</taxon>
        <taxon>eudicotyledons</taxon>
        <taxon>Gunneridae</taxon>
        <taxon>Pentapetalae</taxon>
        <taxon>rosids</taxon>
        <taxon>malvids</taxon>
        <taxon>Brassicales</taxon>
        <taxon>Brassicaceae</taxon>
        <taxon>Camelineae</taxon>
        <taxon>Arabidopsis</taxon>
    </lineage>
</organism>
<name>GT14A_ARATH</name>
<reference key="1">
    <citation type="journal article" date="2014" name="Plant J.">
        <title>The plant glycosyltransferase clone collection for functional genomics.</title>
        <authorList>
            <person name="Lao J."/>
            <person name="Oikawa A."/>
            <person name="Bromley J.R."/>
            <person name="McInerney P."/>
            <person name="Suttangkakul A."/>
            <person name="Smith-Moritz A.M."/>
            <person name="Plahar H."/>
            <person name="Chiu T.-Y."/>
            <person name="Gonzalez Fernandez-Nino S.M.G."/>
            <person name="Ebert B."/>
            <person name="Yang F."/>
            <person name="Christiansen K.M."/>
            <person name="Hansen S.F."/>
            <person name="Stonebloom S."/>
            <person name="Adams P.D."/>
            <person name="Ronald P.C."/>
            <person name="Hillson N.J."/>
            <person name="Hadi M.Z."/>
            <person name="Vega-Sanchez M.E."/>
            <person name="Loque D."/>
            <person name="Scheller H.V."/>
            <person name="Heazlewood J.L."/>
        </authorList>
    </citation>
    <scope>NUCLEOTIDE SEQUENCE [MRNA]</scope>
    <source>
        <strain>cv. Columbia</strain>
    </source>
</reference>
<reference key="2">
    <citation type="journal article" date="1998" name="DNA Res.">
        <title>Structural analysis of Arabidopsis thaliana chromosome 5. IV. Sequence features of the regions of 1,456,315 bp covered by nineteen physically assigned P1 and TAC clones.</title>
        <authorList>
            <person name="Sato S."/>
            <person name="Kaneko T."/>
            <person name="Kotani H."/>
            <person name="Nakamura Y."/>
            <person name="Asamizu E."/>
            <person name="Miyajima N."/>
            <person name="Tabata S."/>
        </authorList>
    </citation>
    <scope>NUCLEOTIDE SEQUENCE [LARGE SCALE GENOMIC DNA]</scope>
    <source>
        <strain>cv. Columbia</strain>
    </source>
</reference>
<reference key="3">
    <citation type="journal article" date="2017" name="Plant J.">
        <title>Araport11: a complete reannotation of the Arabidopsis thaliana reference genome.</title>
        <authorList>
            <person name="Cheng C.Y."/>
            <person name="Krishnakumar V."/>
            <person name="Chan A.P."/>
            <person name="Thibaud-Nissen F."/>
            <person name="Schobel S."/>
            <person name="Town C.D."/>
        </authorList>
    </citation>
    <scope>GENOME REANNOTATION</scope>
    <source>
        <strain>cv. Columbia</strain>
    </source>
</reference>
<reference key="4">
    <citation type="journal article" date="2003" name="Science">
        <title>Empirical analysis of transcriptional activity in the Arabidopsis genome.</title>
        <authorList>
            <person name="Yamada K."/>
            <person name="Lim J."/>
            <person name="Dale J.M."/>
            <person name="Chen H."/>
            <person name="Shinn P."/>
            <person name="Palm C.J."/>
            <person name="Southwick A.M."/>
            <person name="Wu H.C."/>
            <person name="Kim C.J."/>
            <person name="Nguyen M."/>
            <person name="Pham P.K."/>
            <person name="Cheuk R.F."/>
            <person name="Karlin-Newmann G."/>
            <person name="Liu S.X."/>
            <person name="Lam B."/>
            <person name="Sakano H."/>
            <person name="Wu T."/>
            <person name="Yu G."/>
            <person name="Miranda M."/>
            <person name="Quach H.L."/>
            <person name="Tripp M."/>
            <person name="Chang C.H."/>
            <person name="Lee J.M."/>
            <person name="Toriumi M.J."/>
            <person name="Chan M.M."/>
            <person name="Tang C.C."/>
            <person name="Onodera C.S."/>
            <person name="Deng J.M."/>
            <person name="Akiyama K."/>
            <person name="Ansari Y."/>
            <person name="Arakawa T."/>
            <person name="Banh J."/>
            <person name="Banno F."/>
            <person name="Bowser L."/>
            <person name="Brooks S.Y."/>
            <person name="Carninci P."/>
            <person name="Chao Q."/>
            <person name="Choy N."/>
            <person name="Enju A."/>
            <person name="Goldsmith A.D."/>
            <person name="Gurjal M."/>
            <person name="Hansen N.F."/>
            <person name="Hayashizaki Y."/>
            <person name="Johnson-Hopson C."/>
            <person name="Hsuan V.W."/>
            <person name="Iida K."/>
            <person name="Karnes M."/>
            <person name="Khan S."/>
            <person name="Koesema E."/>
            <person name="Ishida J."/>
            <person name="Jiang P.X."/>
            <person name="Jones T."/>
            <person name="Kawai J."/>
            <person name="Kamiya A."/>
            <person name="Meyers C."/>
            <person name="Nakajima M."/>
            <person name="Narusaka M."/>
            <person name="Seki M."/>
            <person name="Sakurai T."/>
            <person name="Satou M."/>
            <person name="Tamse R."/>
            <person name="Vaysberg M."/>
            <person name="Wallender E.K."/>
            <person name="Wong C."/>
            <person name="Yamamura Y."/>
            <person name="Yuan S."/>
            <person name="Shinozaki K."/>
            <person name="Davis R.W."/>
            <person name="Theologis A."/>
            <person name="Ecker J.R."/>
        </authorList>
    </citation>
    <scope>NUCLEOTIDE SEQUENCE [LARGE SCALE MRNA]</scope>
    <source>
        <strain>cv. Columbia</strain>
    </source>
</reference>
<reference key="5">
    <citation type="submission" date="2006-07" db="EMBL/GenBank/DDBJ databases">
        <title>Large-scale analysis of RIKEN Arabidopsis full-length (RAFL) cDNAs.</title>
        <authorList>
            <person name="Totoki Y."/>
            <person name="Seki M."/>
            <person name="Ishida J."/>
            <person name="Nakajima M."/>
            <person name="Enju A."/>
            <person name="Kamiya A."/>
            <person name="Narusaka M."/>
            <person name="Shin-i T."/>
            <person name="Nakagawa M."/>
            <person name="Sakamoto N."/>
            <person name="Oishi K."/>
            <person name="Kohara Y."/>
            <person name="Kobayashi M."/>
            <person name="Toyoda A."/>
            <person name="Sakaki Y."/>
            <person name="Sakurai T."/>
            <person name="Iida K."/>
            <person name="Akiyama K."/>
            <person name="Satou M."/>
            <person name="Toyoda T."/>
            <person name="Konagaya A."/>
            <person name="Carninci P."/>
            <person name="Kawai J."/>
            <person name="Hayashizaki Y."/>
            <person name="Shinozaki K."/>
        </authorList>
    </citation>
    <scope>NUCLEOTIDE SEQUENCE [LARGE SCALE MRNA]</scope>
    <source>
        <strain>cv. Columbia</strain>
    </source>
</reference>
<reference key="6">
    <citation type="journal article" date="2013" name="Plant J.">
        <title>A beta-glucuronosyltransferase from Arabidopsis thaliana involved in biosynthesis of type II arabinogalactan has a role in cell elongation during seedling growth.</title>
        <authorList>
            <person name="Knoch E."/>
            <person name="Dilokpimol A."/>
            <person name="Tryfona T."/>
            <person name="Poulsen C.P."/>
            <person name="Xiong G."/>
            <person name="Harholt J."/>
            <person name="Petersen B.L."/>
            <person name="Ulvskov P."/>
            <person name="Hadi M.Z."/>
            <person name="Kotake T."/>
            <person name="Tsumuraya Y."/>
            <person name="Pauly M."/>
            <person name="Dupree P."/>
            <person name="Geshi N."/>
        </authorList>
    </citation>
    <scope>FUNCTION</scope>
    <scope>SUBCELLULAR LOCATION</scope>
    <scope>DISRUPTION PHENOTYPE</scope>
</reference>
<protein>
    <recommendedName>
        <fullName evidence="5">Beta-glucuronosyltransferase GlcAT14A</fullName>
        <ecNumber evidence="5">2.4.1.-</ecNumber>
    </recommendedName>
    <alternativeName>
        <fullName evidence="5">GT14 family glucuronic acid transferase 1</fullName>
        <shortName evidence="4">AtGlcAT14A</shortName>
    </alternativeName>
</protein>
<comment type="function">
    <text evidence="3">Beta-glucuronosyltransferase involved in the biosynthesis of type II arabinogalactan (AG). Modifies both the beta-1,6-linked galactan and beta-1,3-linked galactan present in type II AG. Transfers glucuronate to beta-1,6-galactooligosaccharides with degrees of polymerization ranging from 3 to 11. Transfers glucuronate to beta-1,3-galactooligosaccharides with degrees of polymerization ranging from 5 to 7. The addition of glucuronate at the O6 position may terminate galactose chain extension. Required for cell elongation during seedling growth.</text>
</comment>
<comment type="subcellular location">
    <subcellularLocation>
        <location evidence="3">Golgi apparatus membrane</location>
        <topology evidence="5">Single-pass type II membrane protein</topology>
    </subcellularLocation>
</comment>
<comment type="disruption phenotype">
    <text evidence="3">Increased cell elongation in hypocotyls and roots from seedlings grown in the dark.</text>
</comment>
<comment type="similarity">
    <text evidence="5">Belongs to the glycosyltransferase 14 family.</text>
</comment>
<proteinExistence type="evidence at transcript level"/>